<protein>
    <recommendedName>
        <fullName evidence="1">Methylated-DNA--protein-cysteine methyltransferase</fullName>
        <ecNumber evidence="1">2.1.1.63</ecNumber>
    </recommendedName>
    <alternativeName>
        <fullName evidence="1">6-O-methylguanine-DNA methyltransferase</fullName>
        <shortName evidence="1">MGMT</shortName>
    </alternativeName>
    <alternativeName>
        <fullName evidence="1">O-6-methylguanine-DNA-alkyltransferase</fullName>
    </alternativeName>
</protein>
<dbReference type="EC" id="2.1.1.63" evidence="1"/>
<dbReference type="EMBL" id="CP001403">
    <property type="protein sequence ID" value="ACP44576.1"/>
    <property type="molecule type" value="Genomic_DNA"/>
</dbReference>
<dbReference type="RefSeq" id="WP_010923891.1">
    <property type="nucleotide sequence ID" value="NC_012622.1"/>
</dbReference>
<dbReference type="SMR" id="C3N9B4"/>
<dbReference type="KEGG" id="siy:YG5714_0282"/>
<dbReference type="HOGENOM" id="CLU_000445_52_2_2"/>
<dbReference type="Proteomes" id="UP000002308">
    <property type="component" value="Chromosome"/>
</dbReference>
<dbReference type="GO" id="GO:0005737">
    <property type="term" value="C:cytoplasm"/>
    <property type="evidence" value="ECO:0007669"/>
    <property type="project" value="UniProtKB-SubCell"/>
</dbReference>
<dbReference type="GO" id="GO:0003908">
    <property type="term" value="F:methylated-DNA-[protein]-cysteine S-methyltransferase activity"/>
    <property type="evidence" value="ECO:0007669"/>
    <property type="project" value="UniProtKB-UniRule"/>
</dbReference>
<dbReference type="GO" id="GO:0006307">
    <property type="term" value="P:DNA alkylation repair"/>
    <property type="evidence" value="ECO:0007669"/>
    <property type="project" value="UniProtKB-UniRule"/>
</dbReference>
<dbReference type="GO" id="GO:0032259">
    <property type="term" value="P:methylation"/>
    <property type="evidence" value="ECO:0007669"/>
    <property type="project" value="UniProtKB-KW"/>
</dbReference>
<dbReference type="CDD" id="cd06445">
    <property type="entry name" value="ATase"/>
    <property type="match status" value="1"/>
</dbReference>
<dbReference type="FunFam" id="1.10.10.10:FF:000214">
    <property type="entry name" value="Methylated-DNA--protein-cysteine methyltransferase"/>
    <property type="match status" value="1"/>
</dbReference>
<dbReference type="Gene3D" id="3.30.160.70">
    <property type="entry name" value="Methylated DNA-protein cysteine methyltransferase domain"/>
    <property type="match status" value="1"/>
</dbReference>
<dbReference type="Gene3D" id="1.10.10.10">
    <property type="entry name" value="Winged helix-like DNA-binding domain superfamily/Winged helix DNA-binding domain"/>
    <property type="match status" value="1"/>
</dbReference>
<dbReference type="HAMAP" id="MF_00772">
    <property type="entry name" value="OGT"/>
    <property type="match status" value="1"/>
</dbReference>
<dbReference type="InterPro" id="IPR001497">
    <property type="entry name" value="MethylDNA_cys_MeTrfase_AS"/>
</dbReference>
<dbReference type="InterPro" id="IPR014048">
    <property type="entry name" value="MethylDNA_cys_MeTrfase_DNA-bd"/>
</dbReference>
<dbReference type="InterPro" id="IPR036217">
    <property type="entry name" value="MethylDNA_cys_MeTrfase_DNAb"/>
</dbReference>
<dbReference type="InterPro" id="IPR008332">
    <property type="entry name" value="MethylG_MeTrfase_N"/>
</dbReference>
<dbReference type="InterPro" id="IPR023546">
    <property type="entry name" value="MGMT"/>
</dbReference>
<dbReference type="InterPro" id="IPR036631">
    <property type="entry name" value="MGMT_N_sf"/>
</dbReference>
<dbReference type="InterPro" id="IPR036388">
    <property type="entry name" value="WH-like_DNA-bd_sf"/>
</dbReference>
<dbReference type="NCBIfam" id="TIGR00589">
    <property type="entry name" value="ogt"/>
    <property type="match status" value="1"/>
</dbReference>
<dbReference type="PANTHER" id="PTHR10815">
    <property type="entry name" value="METHYLATED-DNA--PROTEIN-CYSTEINE METHYLTRANSFERASE"/>
    <property type="match status" value="1"/>
</dbReference>
<dbReference type="PANTHER" id="PTHR10815:SF13">
    <property type="entry name" value="METHYLATED-DNA--PROTEIN-CYSTEINE METHYLTRANSFERASE"/>
    <property type="match status" value="1"/>
</dbReference>
<dbReference type="Pfam" id="PF01035">
    <property type="entry name" value="DNA_binding_1"/>
    <property type="match status" value="1"/>
</dbReference>
<dbReference type="Pfam" id="PF02870">
    <property type="entry name" value="Methyltransf_1N"/>
    <property type="match status" value="1"/>
</dbReference>
<dbReference type="SUPFAM" id="SSF53155">
    <property type="entry name" value="Methylated DNA-protein cysteine methyltransferase domain"/>
    <property type="match status" value="1"/>
</dbReference>
<dbReference type="SUPFAM" id="SSF46767">
    <property type="entry name" value="Methylated DNA-protein cysteine methyltransferase, C-terminal domain"/>
    <property type="match status" value="1"/>
</dbReference>
<dbReference type="PROSITE" id="PS00374">
    <property type="entry name" value="MGMT"/>
    <property type="match status" value="1"/>
</dbReference>
<name>OGT_SACI7</name>
<evidence type="ECO:0000255" key="1">
    <source>
        <dbReference type="HAMAP-Rule" id="MF_00772"/>
    </source>
</evidence>
<gene>
    <name evidence="1" type="primary">ogt</name>
    <name type="ordered locus">YG5714_0282</name>
</gene>
<reference key="1">
    <citation type="journal article" date="2009" name="Proc. Natl. Acad. Sci. U.S.A.">
        <title>Biogeography of the Sulfolobus islandicus pan-genome.</title>
        <authorList>
            <person name="Reno M.L."/>
            <person name="Held N.L."/>
            <person name="Fields C.J."/>
            <person name="Burke P.V."/>
            <person name="Whitaker R.J."/>
        </authorList>
    </citation>
    <scope>NUCLEOTIDE SEQUENCE [LARGE SCALE GENOMIC DNA]</scope>
    <source>
        <strain>Y.G.57.14 / Yellowstone #1</strain>
    </source>
</reference>
<comment type="function">
    <text evidence="1">Involved in the cellular defense against the biological effects of O6-methylguanine (O6-MeG) and O4-methylthymine (O4-MeT) in DNA. Repairs the methylated nucleobase in DNA by stoichiometrically transferring the methyl group to a cysteine residue in the enzyme. This is a suicide reaction: the enzyme is irreversibly inactivated.</text>
</comment>
<comment type="catalytic activity">
    <reaction evidence="1">
        <text>a 6-O-methyl-2'-deoxyguanosine in DNA + L-cysteinyl-[protein] = S-methyl-L-cysteinyl-[protein] + a 2'-deoxyguanosine in DNA</text>
        <dbReference type="Rhea" id="RHEA:24000"/>
        <dbReference type="Rhea" id="RHEA-COMP:10131"/>
        <dbReference type="Rhea" id="RHEA-COMP:10132"/>
        <dbReference type="Rhea" id="RHEA-COMP:11367"/>
        <dbReference type="Rhea" id="RHEA-COMP:11368"/>
        <dbReference type="ChEBI" id="CHEBI:29950"/>
        <dbReference type="ChEBI" id="CHEBI:82612"/>
        <dbReference type="ChEBI" id="CHEBI:85445"/>
        <dbReference type="ChEBI" id="CHEBI:85448"/>
        <dbReference type="EC" id="2.1.1.63"/>
    </reaction>
</comment>
<comment type="catalytic activity">
    <reaction evidence="1">
        <text>a 4-O-methyl-thymidine in DNA + L-cysteinyl-[protein] = a thymidine in DNA + S-methyl-L-cysteinyl-[protein]</text>
        <dbReference type="Rhea" id="RHEA:53428"/>
        <dbReference type="Rhea" id="RHEA-COMP:10131"/>
        <dbReference type="Rhea" id="RHEA-COMP:10132"/>
        <dbReference type="Rhea" id="RHEA-COMP:13555"/>
        <dbReference type="Rhea" id="RHEA-COMP:13556"/>
        <dbReference type="ChEBI" id="CHEBI:29950"/>
        <dbReference type="ChEBI" id="CHEBI:82612"/>
        <dbReference type="ChEBI" id="CHEBI:137386"/>
        <dbReference type="ChEBI" id="CHEBI:137387"/>
        <dbReference type="EC" id="2.1.1.63"/>
    </reaction>
</comment>
<comment type="subcellular location">
    <subcellularLocation>
        <location evidence="1">Cytoplasm</location>
    </subcellularLocation>
</comment>
<comment type="miscellaneous">
    <text>This enzyme catalyzes only one turnover and therefore is not strictly catalytic. According to one definition, an enzyme is a biocatalyst that acts repeatedly and over many reaction cycles.</text>
</comment>
<comment type="similarity">
    <text evidence="1">Belongs to the MGMT family.</text>
</comment>
<accession>C3N9B4</accession>
<sequence>MLVYGLYKSPLGYITVAKDDKGFIMLDFCDCVEGNSRDDSSFTEFFHKLDLYFEGKPINLREPINLKTYPFRLSVFKEVMKIPWGKVMTYKQIADSLGTSPRAVGMALSKNPILLIIPCHRVIAENGIGGYSRGVKLKRALLELEGVKIPE</sequence>
<organism>
    <name type="scientific">Saccharolobus islandicus (strain Y.G.57.14 / Yellowstone #1)</name>
    <name type="common">Sulfolobus islandicus</name>
    <dbReference type="NCBI Taxonomy" id="439386"/>
    <lineage>
        <taxon>Archaea</taxon>
        <taxon>Thermoproteota</taxon>
        <taxon>Thermoprotei</taxon>
        <taxon>Sulfolobales</taxon>
        <taxon>Sulfolobaceae</taxon>
        <taxon>Saccharolobus</taxon>
    </lineage>
</organism>
<keyword id="KW-0963">Cytoplasm</keyword>
<keyword id="KW-0227">DNA damage</keyword>
<keyword id="KW-0234">DNA repair</keyword>
<keyword id="KW-0489">Methyltransferase</keyword>
<keyword id="KW-0808">Transferase</keyword>
<proteinExistence type="inferred from homology"/>
<feature type="chain" id="PRO_1000212906" description="Methylated-DNA--protein-cysteine methyltransferase">
    <location>
        <begin position="1"/>
        <end position="151"/>
    </location>
</feature>
<feature type="active site" description="Nucleophile; methyl group acceptor" evidence="1">
    <location>
        <position position="119"/>
    </location>
</feature>